<sequence length="74" mass="8638">MDLSVKSEENVEYMVEAIKEKLRMVNAGAMRAASFNEEMYEDLRDIYDHVMKRETFSISEMQAITEELGTLIKK</sequence>
<reference key="1">
    <citation type="submission" date="2008-10" db="EMBL/GenBank/DDBJ databases">
        <title>Genome sequence of Bacillus cereus G9842.</title>
        <authorList>
            <person name="Dodson R.J."/>
            <person name="Durkin A.S."/>
            <person name="Rosovitz M.J."/>
            <person name="Rasko D.A."/>
            <person name="Hoffmaster A."/>
            <person name="Ravel J."/>
            <person name="Sutton G."/>
        </authorList>
    </citation>
    <scope>NUCLEOTIDE SEQUENCE [LARGE SCALE GENOMIC DNA]</scope>
    <source>
        <strain>G9842</strain>
    </source>
</reference>
<protein>
    <recommendedName>
        <fullName evidence="1">UPF0435 protein BCG9842_B4853</fullName>
    </recommendedName>
</protein>
<name>Y4853_BACC2</name>
<proteinExistence type="inferred from homology"/>
<comment type="similarity">
    <text evidence="1">Belongs to the UPF0435 family.</text>
</comment>
<organism>
    <name type="scientific">Bacillus cereus (strain G9842)</name>
    <dbReference type="NCBI Taxonomy" id="405531"/>
    <lineage>
        <taxon>Bacteria</taxon>
        <taxon>Bacillati</taxon>
        <taxon>Bacillota</taxon>
        <taxon>Bacilli</taxon>
        <taxon>Bacillales</taxon>
        <taxon>Bacillaceae</taxon>
        <taxon>Bacillus</taxon>
        <taxon>Bacillus cereus group</taxon>
    </lineage>
</organism>
<dbReference type="EMBL" id="CP001186">
    <property type="protein sequence ID" value="ACK93202.1"/>
    <property type="molecule type" value="Genomic_DNA"/>
</dbReference>
<dbReference type="RefSeq" id="WP_000366196.1">
    <property type="nucleotide sequence ID" value="NC_011772.1"/>
</dbReference>
<dbReference type="SMR" id="B7IVV9"/>
<dbReference type="KEGG" id="bcg:BCG9842_B4853"/>
<dbReference type="HOGENOM" id="CLU_199533_1_0_9"/>
<dbReference type="Proteomes" id="UP000006744">
    <property type="component" value="Chromosome"/>
</dbReference>
<dbReference type="HAMAP" id="MF_00829">
    <property type="entry name" value="UPF0435"/>
    <property type="match status" value="1"/>
</dbReference>
<dbReference type="InterPro" id="IPR009507">
    <property type="entry name" value="UPF0435"/>
</dbReference>
<dbReference type="Pfam" id="PF06569">
    <property type="entry name" value="DUF1128"/>
    <property type="match status" value="1"/>
</dbReference>
<gene>
    <name type="ordered locus">BCG9842_B4853</name>
</gene>
<feature type="chain" id="PRO_1000200910" description="UPF0435 protein BCG9842_B4853">
    <location>
        <begin position="1"/>
        <end position="74"/>
    </location>
</feature>
<accession>B7IVV9</accession>
<evidence type="ECO:0000255" key="1">
    <source>
        <dbReference type="HAMAP-Rule" id="MF_00829"/>
    </source>
</evidence>